<feature type="chain" id="PRO_1000008531" description="4-hydroxy-tetrahydrodipicolinate reductase">
    <location>
        <begin position="1"/>
        <end position="267"/>
    </location>
</feature>
<feature type="active site" description="Proton donor/acceptor" evidence="1">
    <location>
        <position position="156"/>
    </location>
</feature>
<feature type="active site" description="Proton donor" evidence="1">
    <location>
        <position position="160"/>
    </location>
</feature>
<feature type="binding site" evidence="1">
    <location>
        <begin position="9"/>
        <end position="14"/>
    </location>
    <ligand>
        <name>NAD(+)</name>
        <dbReference type="ChEBI" id="CHEBI:57540"/>
    </ligand>
</feature>
<feature type="binding site" evidence="1">
    <location>
        <position position="35"/>
    </location>
    <ligand>
        <name>NAD(+)</name>
        <dbReference type="ChEBI" id="CHEBI:57540"/>
    </ligand>
</feature>
<feature type="binding site" evidence="1">
    <location>
        <position position="36"/>
    </location>
    <ligand>
        <name>NADP(+)</name>
        <dbReference type="ChEBI" id="CHEBI:58349"/>
    </ligand>
</feature>
<feature type="binding site" evidence="1">
    <location>
        <begin position="99"/>
        <end position="101"/>
    </location>
    <ligand>
        <name>NAD(+)</name>
        <dbReference type="ChEBI" id="CHEBI:57540"/>
    </ligand>
</feature>
<feature type="binding site" evidence="1">
    <location>
        <begin position="123"/>
        <end position="126"/>
    </location>
    <ligand>
        <name>NAD(+)</name>
        <dbReference type="ChEBI" id="CHEBI:57540"/>
    </ligand>
</feature>
<feature type="binding site" evidence="1">
    <location>
        <position position="157"/>
    </location>
    <ligand>
        <name>(S)-2,3,4,5-tetrahydrodipicolinate</name>
        <dbReference type="ChEBI" id="CHEBI:16845"/>
    </ligand>
</feature>
<feature type="binding site" evidence="1">
    <location>
        <begin position="166"/>
        <end position="167"/>
    </location>
    <ligand>
        <name>(S)-2,3,4,5-tetrahydrodipicolinate</name>
        <dbReference type="ChEBI" id="CHEBI:16845"/>
    </ligand>
</feature>
<name>DAPB_ALKEH</name>
<sequence>MTTRIAIVGAAGRMGRMLIEAVGEADGAELVAAVDRPGSDFVGADAGELAGIGRLGLAVGDDLEAALAAADVLIDFTLPEATGGVLQACRTTGTALVIGTTGLGEAQLAALDAAAGEIPLVFAPNYSTGVNLTLKLAELAARALGDSVDIEIIEAHHRHKVDAPSGTALALGQRVADTLGRDLKQCAVYGREGRTGERDRQTIGFETIRAGDIVGEHTVLYAGAGERIEITHRASNRMTFAAGAVRAAQWVAGREPGRYDMQDVLGL</sequence>
<organism>
    <name type="scientific">Alkalilimnicola ehrlichii (strain ATCC BAA-1101 / DSM 17681 / MLHE-1)</name>
    <dbReference type="NCBI Taxonomy" id="187272"/>
    <lineage>
        <taxon>Bacteria</taxon>
        <taxon>Pseudomonadati</taxon>
        <taxon>Pseudomonadota</taxon>
        <taxon>Gammaproteobacteria</taxon>
        <taxon>Chromatiales</taxon>
        <taxon>Ectothiorhodospiraceae</taxon>
        <taxon>Alkalilimnicola</taxon>
    </lineage>
</organism>
<dbReference type="EC" id="1.17.1.8" evidence="1"/>
<dbReference type="EMBL" id="CP000453">
    <property type="protein sequence ID" value="ABI57242.1"/>
    <property type="molecule type" value="Genomic_DNA"/>
</dbReference>
<dbReference type="RefSeq" id="WP_011629636.1">
    <property type="nucleotide sequence ID" value="NC_008340.1"/>
</dbReference>
<dbReference type="SMR" id="Q0A7E5"/>
<dbReference type="KEGG" id="aeh:Mlg_1898"/>
<dbReference type="eggNOG" id="COG0289">
    <property type="taxonomic scope" value="Bacteria"/>
</dbReference>
<dbReference type="HOGENOM" id="CLU_047479_2_1_6"/>
<dbReference type="OrthoDB" id="9790352at2"/>
<dbReference type="UniPathway" id="UPA00034">
    <property type="reaction ID" value="UER00018"/>
</dbReference>
<dbReference type="Proteomes" id="UP000001962">
    <property type="component" value="Chromosome"/>
</dbReference>
<dbReference type="GO" id="GO:0005829">
    <property type="term" value="C:cytosol"/>
    <property type="evidence" value="ECO:0007669"/>
    <property type="project" value="TreeGrafter"/>
</dbReference>
<dbReference type="GO" id="GO:0008839">
    <property type="term" value="F:4-hydroxy-tetrahydrodipicolinate reductase"/>
    <property type="evidence" value="ECO:0007669"/>
    <property type="project" value="UniProtKB-EC"/>
</dbReference>
<dbReference type="GO" id="GO:0051287">
    <property type="term" value="F:NAD binding"/>
    <property type="evidence" value="ECO:0007669"/>
    <property type="project" value="UniProtKB-UniRule"/>
</dbReference>
<dbReference type="GO" id="GO:0050661">
    <property type="term" value="F:NADP binding"/>
    <property type="evidence" value="ECO:0007669"/>
    <property type="project" value="UniProtKB-UniRule"/>
</dbReference>
<dbReference type="GO" id="GO:0016726">
    <property type="term" value="F:oxidoreductase activity, acting on CH or CH2 groups, NAD or NADP as acceptor"/>
    <property type="evidence" value="ECO:0007669"/>
    <property type="project" value="UniProtKB-UniRule"/>
</dbReference>
<dbReference type="GO" id="GO:0019877">
    <property type="term" value="P:diaminopimelate biosynthetic process"/>
    <property type="evidence" value="ECO:0007669"/>
    <property type="project" value="UniProtKB-UniRule"/>
</dbReference>
<dbReference type="GO" id="GO:0009089">
    <property type="term" value="P:lysine biosynthetic process via diaminopimelate"/>
    <property type="evidence" value="ECO:0007669"/>
    <property type="project" value="UniProtKB-UniRule"/>
</dbReference>
<dbReference type="CDD" id="cd02274">
    <property type="entry name" value="DHDPR_N"/>
    <property type="match status" value="1"/>
</dbReference>
<dbReference type="FunFam" id="3.30.360.10:FF:000004">
    <property type="entry name" value="4-hydroxy-tetrahydrodipicolinate reductase"/>
    <property type="match status" value="1"/>
</dbReference>
<dbReference type="FunFam" id="3.40.50.720:FF:000048">
    <property type="entry name" value="4-hydroxy-tetrahydrodipicolinate reductase"/>
    <property type="match status" value="1"/>
</dbReference>
<dbReference type="Gene3D" id="3.30.360.10">
    <property type="entry name" value="Dihydrodipicolinate Reductase, domain 2"/>
    <property type="match status" value="1"/>
</dbReference>
<dbReference type="Gene3D" id="3.40.50.720">
    <property type="entry name" value="NAD(P)-binding Rossmann-like Domain"/>
    <property type="match status" value="1"/>
</dbReference>
<dbReference type="HAMAP" id="MF_00102">
    <property type="entry name" value="DapB"/>
    <property type="match status" value="1"/>
</dbReference>
<dbReference type="InterPro" id="IPR022663">
    <property type="entry name" value="DapB_C"/>
</dbReference>
<dbReference type="InterPro" id="IPR000846">
    <property type="entry name" value="DapB_N"/>
</dbReference>
<dbReference type="InterPro" id="IPR022664">
    <property type="entry name" value="DapB_N_CS"/>
</dbReference>
<dbReference type="InterPro" id="IPR023940">
    <property type="entry name" value="DHDPR_bac"/>
</dbReference>
<dbReference type="InterPro" id="IPR036291">
    <property type="entry name" value="NAD(P)-bd_dom_sf"/>
</dbReference>
<dbReference type="NCBIfam" id="TIGR00036">
    <property type="entry name" value="dapB"/>
    <property type="match status" value="1"/>
</dbReference>
<dbReference type="PANTHER" id="PTHR20836:SF0">
    <property type="entry name" value="4-HYDROXY-TETRAHYDRODIPICOLINATE REDUCTASE 1, CHLOROPLASTIC-RELATED"/>
    <property type="match status" value="1"/>
</dbReference>
<dbReference type="PANTHER" id="PTHR20836">
    <property type="entry name" value="DIHYDRODIPICOLINATE REDUCTASE"/>
    <property type="match status" value="1"/>
</dbReference>
<dbReference type="Pfam" id="PF05173">
    <property type="entry name" value="DapB_C"/>
    <property type="match status" value="1"/>
</dbReference>
<dbReference type="Pfam" id="PF01113">
    <property type="entry name" value="DapB_N"/>
    <property type="match status" value="1"/>
</dbReference>
<dbReference type="PIRSF" id="PIRSF000161">
    <property type="entry name" value="DHPR"/>
    <property type="match status" value="1"/>
</dbReference>
<dbReference type="SUPFAM" id="SSF55347">
    <property type="entry name" value="Glyceraldehyde-3-phosphate dehydrogenase-like, C-terminal domain"/>
    <property type="match status" value="1"/>
</dbReference>
<dbReference type="SUPFAM" id="SSF51735">
    <property type="entry name" value="NAD(P)-binding Rossmann-fold domains"/>
    <property type="match status" value="1"/>
</dbReference>
<dbReference type="PROSITE" id="PS01298">
    <property type="entry name" value="DAPB"/>
    <property type="match status" value="1"/>
</dbReference>
<gene>
    <name evidence="1" type="primary">dapB</name>
    <name type="ordered locus">Mlg_1898</name>
</gene>
<evidence type="ECO:0000255" key="1">
    <source>
        <dbReference type="HAMAP-Rule" id="MF_00102"/>
    </source>
</evidence>
<evidence type="ECO:0000305" key="2"/>
<accession>Q0A7E5</accession>
<keyword id="KW-0028">Amino-acid biosynthesis</keyword>
<keyword id="KW-0963">Cytoplasm</keyword>
<keyword id="KW-0220">Diaminopimelate biosynthesis</keyword>
<keyword id="KW-0457">Lysine biosynthesis</keyword>
<keyword id="KW-0520">NAD</keyword>
<keyword id="KW-0521">NADP</keyword>
<keyword id="KW-0560">Oxidoreductase</keyword>
<keyword id="KW-1185">Reference proteome</keyword>
<reference key="1">
    <citation type="submission" date="2006-08" db="EMBL/GenBank/DDBJ databases">
        <title>Complete sequence of Alkalilimnicola ehrilichei MLHE-1.</title>
        <authorList>
            <person name="Copeland A."/>
            <person name="Lucas S."/>
            <person name="Lapidus A."/>
            <person name="Barry K."/>
            <person name="Detter J.C."/>
            <person name="Glavina del Rio T."/>
            <person name="Hammon N."/>
            <person name="Israni S."/>
            <person name="Dalin E."/>
            <person name="Tice H."/>
            <person name="Pitluck S."/>
            <person name="Sims D."/>
            <person name="Brettin T."/>
            <person name="Bruce D."/>
            <person name="Han C."/>
            <person name="Tapia R."/>
            <person name="Gilna P."/>
            <person name="Schmutz J."/>
            <person name="Larimer F."/>
            <person name="Land M."/>
            <person name="Hauser L."/>
            <person name="Kyrpides N."/>
            <person name="Mikhailova N."/>
            <person name="Oremland R.S."/>
            <person name="Hoeft S.E."/>
            <person name="Switzer-Blum J."/>
            <person name="Kulp T."/>
            <person name="King G."/>
            <person name="Tabita R."/>
            <person name="Witte B."/>
            <person name="Santini J.M."/>
            <person name="Basu P."/>
            <person name="Hollibaugh J.T."/>
            <person name="Xie G."/>
            <person name="Stolz J.F."/>
            <person name="Richardson P."/>
        </authorList>
    </citation>
    <scope>NUCLEOTIDE SEQUENCE [LARGE SCALE GENOMIC DNA]</scope>
    <source>
        <strain>ATCC BAA-1101 / DSM 17681 / MLHE-1</strain>
    </source>
</reference>
<protein>
    <recommendedName>
        <fullName evidence="1">4-hydroxy-tetrahydrodipicolinate reductase</fullName>
        <shortName evidence="1">HTPA reductase</shortName>
        <ecNumber evidence="1">1.17.1.8</ecNumber>
    </recommendedName>
</protein>
<comment type="function">
    <text evidence="1">Catalyzes the conversion of 4-hydroxy-tetrahydrodipicolinate (HTPA) to tetrahydrodipicolinate.</text>
</comment>
<comment type="catalytic activity">
    <reaction evidence="1">
        <text>(S)-2,3,4,5-tetrahydrodipicolinate + NAD(+) + H2O = (2S,4S)-4-hydroxy-2,3,4,5-tetrahydrodipicolinate + NADH + H(+)</text>
        <dbReference type="Rhea" id="RHEA:35323"/>
        <dbReference type="ChEBI" id="CHEBI:15377"/>
        <dbReference type="ChEBI" id="CHEBI:15378"/>
        <dbReference type="ChEBI" id="CHEBI:16845"/>
        <dbReference type="ChEBI" id="CHEBI:57540"/>
        <dbReference type="ChEBI" id="CHEBI:57945"/>
        <dbReference type="ChEBI" id="CHEBI:67139"/>
        <dbReference type="EC" id="1.17.1.8"/>
    </reaction>
</comment>
<comment type="catalytic activity">
    <reaction evidence="1">
        <text>(S)-2,3,4,5-tetrahydrodipicolinate + NADP(+) + H2O = (2S,4S)-4-hydroxy-2,3,4,5-tetrahydrodipicolinate + NADPH + H(+)</text>
        <dbReference type="Rhea" id="RHEA:35331"/>
        <dbReference type="ChEBI" id="CHEBI:15377"/>
        <dbReference type="ChEBI" id="CHEBI:15378"/>
        <dbReference type="ChEBI" id="CHEBI:16845"/>
        <dbReference type="ChEBI" id="CHEBI:57783"/>
        <dbReference type="ChEBI" id="CHEBI:58349"/>
        <dbReference type="ChEBI" id="CHEBI:67139"/>
        <dbReference type="EC" id="1.17.1.8"/>
    </reaction>
</comment>
<comment type="pathway">
    <text evidence="1">Amino-acid biosynthesis; L-lysine biosynthesis via DAP pathway; (S)-tetrahydrodipicolinate from L-aspartate: step 4/4.</text>
</comment>
<comment type="subcellular location">
    <subcellularLocation>
        <location evidence="1">Cytoplasm</location>
    </subcellularLocation>
</comment>
<comment type="similarity">
    <text evidence="1">Belongs to the DapB family.</text>
</comment>
<comment type="caution">
    <text evidence="2">Was originally thought to be a dihydrodipicolinate reductase (DHDPR), catalyzing the conversion of dihydrodipicolinate to tetrahydrodipicolinate. However, it was shown in E.coli that the substrate of the enzymatic reaction is not dihydrodipicolinate (DHDP) but in fact (2S,4S)-4-hydroxy-2,3,4,5-tetrahydrodipicolinic acid (HTPA), the product released by the DapA-catalyzed reaction.</text>
</comment>
<proteinExistence type="inferred from homology"/>